<evidence type="ECO:0000255" key="1">
    <source>
        <dbReference type="HAMAP-Rule" id="MF_00493"/>
    </source>
</evidence>
<name>TAL_HELPS</name>
<organism>
    <name type="scientific">Helicobacter pylori (strain Shi470)</name>
    <dbReference type="NCBI Taxonomy" id="512562"/>
    <lineage>
        <taxon>Bacteria</taxon>
        <taxon>Pseudomonadati</taxon>
        <taxon>Campylobacterota</taxon>
        <taxon>Epsilonproteobacteria</taxon>
        <taxon>Campylobacterales</taxon>
        <taxon>Helicobacteraceae</taxon>
        <taxon>Helicobacter</taxon>
    </lineage>
</organism>
<comment type="function">
    <text evidence="1">Transaldolase is important for the balance of metabolites in the pentose-phosphate pathway.</text>
</comment>
<comment type="catalytic activity">
    <reaction evidence="1">
        <text>D-sedoheptulose 7-phosphate + D-glyceraldehyde 3-phosphate = D-erythrose 4-phosphate + beta-D-fructose 6-phosphate</text>
        <dbReference type="Rhea" id="RHEA:17053"/>
        <dbReference type="ChEBI" id="CHEBI:16897"/>
        <dbReference type="ChEBI" id="CHEBI:57483"/>
        <dbReference type="ChEBI" id="CHEBI:57634"/>
        <dbReference type="ChEBI" id="CHEBI:59776"/>
        <dbReference type="EC" id="2.2.1.2"/>
    </reaction>
</comment>
<comment type="pathway">
    <text evidence="1">Carbohydrate degradation; pentose phosphate pathway; D-glyceraldehyde 3-phosphate and beta-D-fructose 6-phosphate from D-ribose 5-phosphate and D-xylulose 5-phosphate (non-oxidative stage): step 2/3.</text>
</comment>
<comment type="subcellular location">
    <subcellularLocation>
        <location evidence="1">Cytoplasm</location>
    </subcellularLocation>
</comment>
<comment type="similarity">
    <text evidence="1">Belongs to the transaldolase family. Type 2 subfamily.</text>
</comment>
<dbReference type="EC" id="2.2.1.2" evidence="1"/>
<dbReference type="EMBL" id="CP001072">
    <property type="protein sequence ID" value="ACD48923.1"/>
    <property type="molecule type" value="Genomic_DNA"/>
</dbReference>
<dbReference type="RefSeq" id="WP_001155056.1">
    <property type="nucleotide sequence ID" value="NC_010698.2"/>
</dbReference>
<dbReference type="SMR" id="B2UVP1"/>
<dbReference type="KEGG" id="hps:HPSH_07660"/>
<dbReference type="HOGENOM" id="CLU_050771_1_0_7"/>
<dbReference type="UniPathway" id="UPA00115">
    <property type="reaction ID" value="UER00414"/>
</dbReference>
<dbReference type="GO" id="GO:0005737">
    <property type="term" value="C:cytoplasm"/>
    <property type="evidence" value="ECO:0007669"/>
    <property type="project" value="UniProtKB-SubCell"/>
</dbReference>
<dbReference type="GO" id="GO:0004801">
    <property type="term" value="F:transaldolase activity"/>
    <property type="evidence" value="ECO:0007669"/>
    <property type="project" value="UniProtKB-UniRule"/>
</dbReference>
<dbReference type="GO" id="GO:0005975">
    <property type="term" value="P:carbohydrate metabolic process"/>
    <property type="evidence" value="ECO:0007669"/>
    <property type="project" value="InterPro"/>
</dbReference>
<dbReference type="GO" id="GO:0006098">
    <property type="term" value="P:pentose-phosphate shunt"/>
    <property type="evidence" value="ECO:0007669"/>
    <property type="project" value="UniProtKB-UniRule"/>
</dbReference>
<dbReference type="CDD" id="cd00955">
    <property type="entry name" value="Transaldolase_like"/>
    <property type="match status" value="1"/>
</dbReference>
<dbReference type="Gene3D" id="3.20.20.70">
    <property type="entry name" value="Aldolase class I"/>
    <property type="match status" value="1"/>
</dbReference>
<dbReference type="HAMAP" id="MF_00493">
    <property type="entry name" value="Transaldolase_2"/>
    <property type="match status" value="1"/>
</dbReference>
<dbReference type="InterPro" id="IPR013785">
    <property type="entry name" value="Aldolase_TIM"/>
</dbReference>
<dbReference type="InterPro" id="IPR001585">
    <property type="entry name" value="TAL/FSA"/>
</dbReference>
<dbReference type="InterPro" id="IPR004732">
    <property type="entry name" value="Transaldolase_2"/>
</dbReference>
<dbReference type="InterPro" id="IPR018225">
    <property type="entry name" value="Transaldolase_AS"/>
</dbReference>
<dbReference type="NCBIfam" id="NF003026">
    <property type="entry name" value="PRK03903.1"/>
    <property type="match status" value="1"/>
</dbReference>
<dbReference type="NCBIfam" id="TIGR00876">
    <property type="entry name" value="tal_mycobact"/>
    <property type="match status" value="1"/>
</dbReference>
<dbReference type="PANTHER" id="PTHR10683">
    <property type="entry name" value="TRANSALDOLASE"/>
    <property type="match status" value="1"/>
</dbReference>
<dbReference type="PANTHER" id="PTHR10683:SF31">
    <property type="entry name" value="TRANSALDOLASE"/>
    <property type="match status" value="1"/>
</dbReference>
<dbReference type="Pfam" id="PF00923">
    <property type="entry name" value="TAL_FSA"/>
    <property type="match status" value="1"/>
</dbReference>
<dbReference type="PIRSF" id="PIRSF036915">
    <property type="entry name" value="Trnald_Bac_Plnt"/>
    <property type="match status" value="1"/>
</dbReference>
<dbReference type="SUPFAM" id="SSF51569">
    <property type="entry name" value="Aldolase"/>
    <property type="match status" value="1"/>
</dbReference>
<dbReference type="PROSITE" id="PS01054">
    <property type="entry name" value="TRANSALDOLASE_1"/>
    <property type="match status" value="1"/>
</dbReference>
<dbReference type="PROSITE" id="PS00958">
    <property type="entry name" value="TRANSALDOLASE_2"/>
    <property type="match status" value="1"/>
</dbReference>
<reference key="1">
    <citation type="submission" date="2008-05" db="EMBL/GenBank/DDBJ databases">
        <title>Genome sequence of Helicobacter pylori from the remote Amazon: traces of Asian ancestry of the first Americans.</title>
        <authorList>
            <person name="Kersulyte D."/>
            <person name="Kalia A."/>
            <person name="Gilman R.H."/>
            <person name="Berg D.E."/>
        </authorList>
    </citation>
    <scope>NUCLEOTIDE SEQUENCE [LARGE SCALE GENOMIC DNA]</scope>
    <source>
        <strain>Shi470</strain>
    </source>
</reference>
<accession>B2UVP1</accession>
<feature type="chain" id="PRO_1000126266" description="Transaldolase">
    <location>
        <begin position="1"/>
        <end position="316"/>
    </location>
</feature>
<feature type="active site" description="Schiff-base intermediate with substrate" evidence="1">
    <location>
        <position position="127"/>
    </location>
</feature>
<keyword id="KW-0963">Cytoplasm</keyword>
<keyword id="KW-0570">Pentose shunt</keyword>
<keyword id="KW-0704">Schiff base</keyword>
<keyword id="KW-0808">Transferase</keyword>
<protein>
    <recommendedName>
        <fullName evidence="1">Transaldolase</fullName>
        <ecNumber evidence="1">2.2.1.2</ecNumber>
    </recommendedName>
</protein>
<proteinExistence type="inferred from homology"/>
<sequence>MQEFSLWCDFIERDFLENDFLKLINKGAICGATSNPSLFCEAITKSAFYKDEIAKLKGKKAKEIYETLALKDILQASSALMPLYEKDPNNGYISLEIDPFLEDDAPKSIDEAKRLFKTLNRPNVMIKVPASESGLEVVSALTKASIPVNATLVFSPKIARKTAQILAKEAQKRAVISVFVSRFDKEIDPLVPKNLQAKSGIINATECYYQINQHANKLTSALFASTGVKSNTLAKGYYIKALCFKNSINTAPLEALNAYLLDPNTEYQTPLKITEIEAFKKELKACNIDLENTAQKLLKEGLIAFKQSFEKLLSSF</sequence>
<gene>
    <name evidence="1" type="primary">tal</name>
    <name type="ordered locus">HPSH_07660</name>
</gene>